<comment type="function">
    <text evidence="1">S-adenosyl-L-methionine-dependent methyltransferase that acts as a component of the wyosine derivatives biosynthesis pathway. Probably methylates N-4 position of wybutosine-86 to produce wybutosine-72.</text>
</comment>
<comment type="catalytic activity">
    <reaction evidence="1">
        <text>4-demethyl-7-[(3S)-3-amino-3-carboxypropyl]wyosine(37) in tRNA(Phe) + S-adenosyl-L-methionine = 7-[(3S)-3-amino-3-carboxypropyl]wyosine(37) in tRNA(Phe) + S-adenosyl-L-homocysteine + H(+)</text>
        <dbReference type="Rhea" id="RHEA:36635"/>
        <dbReference type="Rhea" id="RHEA-COMP:10378"/>
        <dbReference type="Rhea" id="RHEA-COMP:10379"/>
        <dbReference type="ChEBI" id="CHEBI:15378"/>
        <dbReference type="ChEBI" id="CHEBI:57856"/>
        <dbReference type="ChEBI" id="CHEBI:59789"/>
        <dbReference type="ChEBI" id="CHEBI:73543"/>
        <dbReference type="ChEBI" id="CHEBI:73550"/>
        <dbReference type="EC" id="2.1.1.282"/>
    </reaction>
</comment>
<comment type="similarity">
    <text evidence="1">Belongs to the TYW3 family.</text>
</comment>
<comment type="sequence caution" evidence="2">
    <conflict type="erroneous initiation">
        <sequence resource="EMBL-CDS" id="AAL82158"/>
    </conflict>
</comment>
<dbReference type="EC" id="2.1.1.282" evidence="1"/>
<dbReference type="EMBL" id="AE009950">
    <property type="protein sequence ID" value="AAL82158.1"/>
    <property type="status" value="ALT_INIT"/>
    <property type="molecule type" value="Genomic_DNA"/>
</dbReference>
<dbReference type="SMR" id="Q8TZG0"/>
<dbReference type="STRING" id="186497.PF2034"/>
<dbReference type="PaxDb" id="186497-PF2034"/>
<dbReference type="KEGG" id="pfu:PF2034"/>
<dbReference type="PATRIC" id="fig|186497.12.peg.2111"/>
<dbReference type="eggNOG" id="arCOG04156">
    <property type="taxonomic scope" value="Archaea"/>
</dbReference>
<dbReference type="HOGENOM" id="CLU_047426_2_0_2"/>
<dbReference type="OrthoDB" id="19299at2157"/>
<dbReference type="PhylomeDB" id="Q8TZG0"/>
<dbReference type="Proteomes" id="UP000001013">
    <property type="component" value="Chromosome"/>
</dbReference>
<dbReference type="GO" id="GO:0008175">
    <property type="term" value="F:tRNA methyltransferase activity"/>
    <property type="evidence" value="ECO:0007669"/>
    <property type="project" value="InterPro"/>
</dbReference>
<dbReference type="GO" id="GO:0030488">
    <property type="term" value="P:tRNA methylation"/>
    <property type="evidence" value="ECO:0007669"/>
    <property type="project" value="InterPro"/>
</dbReference>
<dbReference type="GO" id="GO:0031591">
    <property type="term" value="P:wybutosine biosynthetic process"/>
    <property type="evidence" value="ECO:0007669"/>
    <property type="project" value="InterPro"/>
</dbReference>
<dbReference type="FunFam" id="3.30.1960.10:FF:000010">
    <property type="entry name" value="tRNA(Phe) 7-((3-amino-3-carboxypropyl)-4-demethylwyosine(37)-N(4))-methyltransferase 1"/>
    <property type="match status" value="1"/>
</dbReference>
<dbReference type="Gene3D" id="3.30.1960.10">
    <property type="entry name" value="tRNA wybutosine-synthesizing-like"/>
    <property type="match status" value="1"/>
</dbReference>
<dbReference type="HAMAP" id="MF_00266">
    <property type="entry name" value="TYW3_archaea"/>
    <property type="match status" value="1"/>
</dbReference>
<dbReference type="InterPro" id="IPR022908">
    <property type="entry name" value="Taw3"/>
</dbReference>
<dbReference type="InterPro" id="IPR003827">
    <property type="entry name" value="tRNA_yW-synthesising"/>
</dbReference>
<dbReference type="InterPro" id="IPR036602">
    <property type="entry name" value="tRNA_yW-synthesising-like_sf"/>
</dbReference>
<dbReference type="NCBIfam" id="NF003264">
    <property type="entry name" value="PRK04235.1-2"/>
    <property type="match status" value="1"/>
</dbReference>
<dbReference type="NCBIfam" id="NF047731">
    <property type="entry name" value="tRNAMtaseTaw3"/>
    <property type="match status" value="1"/>
</dbReference>
<dbReference type="PANTHER" id="PTHR48418">
    <property type="entry name" value="TRNA WYBUTOSINE-SYNTHESIZING PROTEIN 3"/>
    <property type="match status" value="1"/>
</dbReference>
<dbReference type="PANTHER" id="PTHR48418:SF1">
    <property type="entry name" value="TRNA WYBUTOSINE-SYNTHESIZING PROTEIN 3"/>
    <property type="match status" value="1"/>
</dbReference>
<dbReference type="Pfam" id="PF02676">
    <property type="entry name" value="TYW3"/>
    <property type="match status" value="1"/>
</dbReference>
<dbReference type="SUPFAM" id="SSF111278">
    <property type="entry name" value="SSo0622-like"/>
    <property type="match status" value="1"/>
</dbReference>
<evidence type="ECO:0000255" key="1">
    <source>
        <dbReference type="HAMAP-Rule" id="MF_00266"/>
    </source>
</evidence>
<evidence type="ECO:0000305" key="2"/>
<accession>Q8TZG0</accession>
<feature type="chain" id="PRO_0000157099" description="tRNA(Phe) 7-((3-amino-3-carboxypropyl)-4-demethylwyosine(37)-N(4))-methyltransferase 2">
    <location>
        <begin position="1"/>
        <end position="206"/>
    </location>
</feature>
<organism>
    <name type="scientific">Pyrococcus furiosus (strain ATCC 43587 / DSM 3638 / JCM 8422 / Vc1)</name>
    <dbReference type="NCBI Taxonomy" id="186497"/>
    <lineage>
        <taxon>Archaea</taxon>
        <taxon>Methanobacteriati</taxon>
        <taxon>Methanobacteriota</taxon>
        <taxon>Thermococci</taxon>
        <taxon>Thermococcales</taxon>
        <taxon>Thermococcaceae</taxon>
        <taxon>Pyrococcus</taxon>
    </lineage>
</organism>
<protein>
    <recommendedName>
        <fullName evidence="1">tRNA(Phe) 7-((3-amino-3-carboxypropyl)-4-demethylwyosine(37)-N(4))-methyltransferase 2</fullName>
        <ecNumber evidence="1">2.1.1.282</ecNumber>
    </recommendedName>
    <alternativeName>
        <fullName evidence="1">tRNA wyosine derivatives biosynthesis protein Taw3 2</fullName>
    </alternativeName>
</protein>
<proteinExistence type="inferred from homology"/>
<keyword id="KW-0489">Methyltransferase</keyword>
<keyword id="KW-1185">Reference proteome</keyword>
<keyword id="KW-0949">S-adenosyl-L-methionine</keyword>
<keyword id="KW-0808">Transferase</keyword>
<keyword id="KW-0819">tRNA processing</keyword>
<name>TYW32_PYRFU</name>
<sequence>MKAKREALLSLFQAIKENKVDEDIVELLLLINSIKGVYTTSSCSGRIGIIEEPSLGAKPLSRWLIKVHRPIKFEEAKKALKNAQKGLIFLKSQPPIFHVVTESLELARKIHEIGLSSGFKYTTYKVISRRYLVEINGTEYLTVPLGKDGKVFVTDEYLEFVIEIGNQMLMRGKSRLPRLREKFEELKEEVGEDPLFTTLSTEKLSL</sequence>
<gene>
    <name evidence="1" type="primary">taw3-2</name>
    <name type="ordered locus">PF2034</name>
</gene>
<reference key="1">
    <citation type="journal article" date="1999" name="Genetics">
        <title>Divergence of the hyperthermophilic archaea Pyrococcus furiosus and P. horikoshii inferred from complete genomic sequences.</title>
        <authorList>
            <person name="Maeder D.L."/>
            <person name="Weiss R.B."/>
            <person name="Dunn D.M."/>
            <person name="Cherry J.L."/>
            <person name="Gonzalez J.M."/>
            <person name="DiRuggiero J."/>
            <person name="Robb F.T."/>
        </authorList>
    </citation>
    <scope>NUCLEOTIDE SEQUENCE [LARGE SCALE GENOMIC DNA]</scope>
    <source>
        <strain>ATCC 43587 / DSM 3638 / JCM 8422 / Vc1</strain>
    </source>
</reference>